<comment type="function">
    <text evidence="1">Plays a role as a glutathione (GSH)-dependent antioxidant. May be involved in a redox-related process. May play a role in the myopathies of selenium deficiency (By similarity).</text>
</comment>
<comment type="subunit">
    <text evidence="1">Interacts with DPYSL2, PRDX1, YWHAB, YWHAG, HSP70 and HSP90.</text>
</comment>
<comment type="subcellular location">
    <subcellularLocation>
        <location evidence="1">Cytoplasm</location>
    </subcellularLocation>
</comment>
<comment type="similarity">
    <text evidence="3">Belongs to the SelWTH family. Selenoprotein W subfamily.</text>
</comment>
<feature type="chain" id="PRO_0000265101" description="Selenoprotein W">
    <location>
        <begin position="1"/>
        <end position="87"/>
    </location>
</feature>
<feature type="non-standard amino acid" description="Selenocysteine">
    <location>
        <position position="13"/>
    </location>
</feature>
<feature type="modified residue" description="S-glutathionyl cysteine" evidence="1">
    <location>
        <position position="37"/>
    </location>
</feature>
<feature type="cross-link" description="Cysteinyl-selenocysteine (Cys-Sec); redox-active" evidence="1">
    <location>
        <begin position="10"/>
        <end position="13"/>
    </location>
</feature>
<reference key="1">
    <citation type="submission" date="2004-12" db="EMBL/GenBank/DDBJ databases">
        <authorList>
            <consortium name="The German cDNA consortium"/>
        </authorList>
    </citation>
    <scope>NUCLEOTIDE SEQUENCE [LARGE SCALE MRNA]</scope>
    <source>
        <tissue>Heart</tissue>
    </source>
</reference>
<organism>
    <name type="scientific">Pongo abelii</name>
    <name type="common">Sumatran orangutan</name>
    <name type="synonym">Pongo pygmaeus abelii</name>
    <dbReference type="NCBI Taxonomy" id="9601"/>
    <lineage>
        <taxon>Eukaryota</taxon>
        <taxon>Metazoa</taxon>
        <taxon>Chordata</taxon>
        <taxon>Craniata</taxon>
        <taxon>Vertebrata</taxon>
        <taxon>Euteleostomi</taxon>
        <taxon>Mammalia</taxon>
        <taxon>Eutheria</taxon>
        <taxon>Euarchontoglires</taxon>
        <taxon>Primates</taxon>
        <taxon>Haplorrhini</taxon>
        <taxon>Catarrhini</taxon>
        <taxon>Hominidae</taxon>
        <taxon>Pongo</taxon>
    </lineage>
</organism>
<evidence type="ECO:0000250" key="1"/>
<evidence type="ECO:0000250" key="2">
    <source>
        <dbReference type="UniProtKB" id="P63302"/>
    </source>
</evidence>
<evidence type="ECO:0000305" key="3"/>
<accession>Q5NVB2</accession>
<name>SELW_PONAB</name>
<gene>
    <name evidence="2" type="primary">SELENOW</name>
</gene>
<proteinExistence type="inferred from homology"/>
<protein>
    <recommendedName>
        <fullName evidence="2">Selenoprotein W</fullName>
        <shortName evidence="2">SelW</shortName>
    </recommendedName>
</protein>
<dbReference type="EMBL" id="CR926472">
    <property type="protein sequence ID" value="CAI30265.1"/>
    <property type="molecule type" value="mRNA"/>
</dbReference>
<dbReference type="RefSeq" id="NP_001127129.1">
    <property type="nucleotide sequence ID" value="NM_001133657.1"/>
</dbReference>
<dbReference type="FunCoup" id="Q5NVB2">
    <property type="interactions" value="9"/>
</dbReference>
<dbReference type="GeneID" id="100174175"/>
<dbReference type="KEGG" id="pon:100174175"/>
<dbReference type="CTD" id="6415"/>
<dbReference type="eggNOG" id="ENOG502S9W8">
    <property type="taxonomic scope" value="Eukaryota"/>
</dbReference>
<dbReference type="InParanoid" id="Q5NVB2"/>
<dbReference type="OrthoDB" id="444492at2759"/>
<dbReference type="Proteomes" id="UP000001595">
    <property type="component" value="Unplaced"/>
</dbReference>
<dbReference type="GO" id="GO:0005829">
    <property type="term" value="C:cytosol"/>
    <property type="evidence" value="ECO:0007669"/>
    <property type="project" value="TreeGrafter"/>
</dbReference>
<dbReference type="GO" id="GO:0016209">
    <property type="term" value="F:antioxidant activity"/>
    <property type="evidence" value="ECO:0007669"/>
    <property type="project" value="UniProtKB-KW"/>
</dbReference>
<dbReference type="FunFam" id="3.40.30.10:FF:000158">
    <property type="entry name" value="Selenoprotein W"/>
    <property type="match status" value="1"/>
</dbReference>
<dbReference type="Gene3D" id="3.40.30.10">
    <property type="entry name" value="Glutaredoxin"/>
    <property type="match status" value="1"/>
</dbReference>
<dbReference type="InterPro" id="IPR011893">
    <property type="entry name" value="Selenoprotein_Rdx-typ"/>
</dbReference>
<dbReference type="InterPro" id="IPR051441">
    <property type="entry name" value="SelW_related"/>
</dbReference>
<dbReference type="InterPro" id="IPR036249">
    <property type="entry name" value="Thioredoxin-like_sf"/>
</dbReference>
<dbReference type="NCBIfam" id="TIGR02174">
    <property type="entry name" value="CXXU_selWTH"/>
    <property type="match status" value="1"/>
</dbReference>
<dbReference type="PANTHER" id="PTHR15124">
    <property type="entry name" value="SELENOPROTEIN W"/>
    <property type="match status" value="1"/>
</dbReference>
<dbReference type="PANTHER" id="PTHR15124:SF16">
    <property type="entry name" value="SELENOPROTEIN W"/>
    <property type="match status" value="1"/>
</dbReference>
<dbReference type="Pfam" id="PF10262">
    <property type="entry name" value="Rdx"/>
    <property type="match status" value="1"/>
</dbReference>
<dbReference type="SUPFAM" id="SSF52833">
    <property type="entry name" value="Thioredoxin-like"/>
    <property type="match status" value="1"/>
</dbReference>
<sequence length="87" mass="9448">MALAVRVVYCGAUGYKSKYLQLKKKLEDEFPGRLDICGEGTPQATGFFEVMVAGKLIHSKKKGDGYVDTESKFLKLVAAIKAALAQG</sequence>
<keyword id="KW-0049">Antioxidant</keyword>
<keyword id="KW-0963">Cytoplasm</keyword>
<keyword id="KW-0318">Glutathionylation</keyword>
<keyword id="KW-0676">Redox-active center</keyword>
<keyword id="KW-1185">Reference proteome</keyword>
<keyword id="KW-0712">Selenocysteine</keyword>